<accession>A1KKR0</accession>
<gene>
    <name evidence="1" type="primary">lipA</name>
    <name type="ordered locus">BCG_2234</name>
</gene>
<comment type="function">
    <text evidence="1">Catalyzes the radical-mediated insertion of two sulfur atoms into the C-6 and C-8 positions of the octanoyl moiety bound to the lipoyl domains of lipoate-dependent enzymes, thereby converting the octanoylated domains into lipoylated derivatives.</text>
</comment>
<comment type="catalytic activity">
    <reaction evidence="1">
        <text>[[Fe-S] cluster scaffold protein carrying a second [4Fe-4S](2+) cluster] + N(6)-octanoyl-L-lysyl-[protein] + 2 oxidized [2Fe-2S]-[ferredoxin] + 2 S-adenosyl-L-methionine + 4 H(+) = [[Fe-S] cluster scaffold protein] + N(6)-[(R)-dihydrolipoyl]-L-lysyl-[protein] + 4 Fe(3+) + 2 hydrogen sulfide + 2 5'-deoxyadenosine + 2 L-methionine + 2 reduced [2Fe-2S]-[ferredoxin]</text>
        <dbReference type="Rhea" id="RHEA:16585"/>
        <dbReference type="Rhea" id="RHEA-COMP:9928"/>
        <dbReference type="Rhea" id="RHEA-COMP:10000"/>
        <dbReference type="Rhea" id="RHEA-COMP:10001"/>
        <dbReference type="Rhea" id="RHEA-COMP:10475"/>
        <dbReference type="Rhea" id="RHEA-COMP:14568"/>
        <dbReference type="Rhea" id="RHEA-COMP:14569"/>
        <dbReference type="ChEBI" id="CHEBI:15378"/>
        <dbReference type="ChEBI" id="CHEBI:17319"/>
        <dbReference type="ChEBI" id="CHEBI:29034"/>
        <dbReference type="ChEBI" id="CHEBI:29919"/>
        <dbReference type="ChEBI" id="CHEBI:33722"/>
        <dbReference type="ChEBI" id="CHEBI:33737"/>
        <dbReference type="ChEBI" id="CHEBI:33738"/>
        <dbReference type="ChEBI" id="CHEBI:57844"/>
        <dbReference type="ChEBI" id="CHEBI:59789"/>
        <dbReference type="ChEBI" id="CHEBI:78809"/>
        <dbReference type="ChEBI" id="CHEBI:83100"/>
        <dbReference type="EC" id="2.8.1.8"/>
    </reaction>
</comment>
<comment type="cofactor">
    <cofactor evidence="1">
        <name>[4Fe-4S] cluster</name>
        <dbReference type="ChEBI" id="CHEBI:49883"/>
    </cofactor>
    <text evidence="1">Binds 2 [4Fe-4S] clusters per subunit. One cluster is coordinated with 3 cysteines and an exchangeable S-adenosyl-L-methionine.</text>
</comment>
<comment type="pathway">
    <text evidence="1">Protein modification; protein lipoylation via endogenous pathway; protein N(6)-(lipoyl)lysine from octanoyl-[acyl-carrier-protein]: step 2/2.</text>
</comment>
<comment type="subcellular location">
    <subcellularLocation>
        <location evidence="1">Cytoplasm</location>
    </subcellularLocation>
</comment>
<comment type="similarity">
    <text evidence="1">Belongs to the radical SAM superfamily. Lipoyl synthase family.</text>
</comment>
<evidence type="ECO:0000255" key="1">
    <source>
        <dbReference type="HAMAP-Rule" id="MF_00206"/>
    </source>
</evidence>
<evidence type="ECO:0000255" key="2">
    <source>
        <dbReference type="PROSITE-ProRule" id="PRU01266"/>
    </source>
</evidence>
<organism>
    <name type="scientific">Mycobacterium bovis (strain BCG / Pasteur 1173P2)</name>
    <dbReference type="NCBI Taxonomy" id="410289"/>
    <lineage>
        <taxon>Bacteria</taxon>
        <taxon>Bacillati</taxon>
        <taxon>Actinomycetota</taxon>
        <taxon>Actinomycetes</taxon>
        <taxon>Mycobacteriales</taxon>
        <taxon>Mycobacteriaceae</taxon>
        <taxon>Mycobacterium</taxon>
        <taxon>Mycobacterium tuberculosis complex</taxon>
    </lineage>
</organism>
<proteinExistence type="inferred from homology"/>
<name>LIPA_MYCBP</name>
<reference key="1">
    <citation type="journal article" date="2007" name="Proc. Natl. Acad. Sci. U.S.A.">
        <title>Genome plasticity of BCG and impact on vaccine efficacy.</title>
        <authorList>
            <person name="Brosch R."/>
            <person name="Gordon S.V."/>
            <person name="Garnier T."/>
            <person name="Eiglmeier K."/>
            <person name="Frigui W."/>
            <person name="Valenti P."/>
            <person name="Dos Santos S."/>
            <person name="Duthoy S."/>
            <person name="Lacroix C."/>
            <person name="Garcia-Pelayo C."/>
            <person name="Inwald J.K."/>
            <person name="Golby P."/>
            <person name="Garcia J.N."/>
            <person name="Hewinson R.G."/>
            <person name="Behr M.A."/>
            <person name="Quail M.A."/>
            <person name="Churcher C."/>
            <person name="Barrell B.G."/>
            <person name="Parkhill J."/>
            <person name="Cole S.T."/>
        </authorList>
    </citation>
    <scope>NUCLEOTIDE SEQUENCE [LARGE SCALE GENOMIC DNA]</scope>
    <source>
        <strain>BCG / Pasteur 1173P2</strain>
    </source>
</reference>
<sequence>MSVAAEGRRLLRLEVRNAQTPIERKPPWIKTRARIGPEYTELKNLVRREGLHTVCEEAGCPNIFECWEDREATFLIGGDQCTRRCDFCQIDTGKPAELDRDEPRRVADSVRTMGLRYATVTGVARDDLPDGGAWLYAATVRAIKELNPSTGVELLIPDFNGEPTRLAEVFESGPEVLAHNVETVPRIFKRIRPAFTYRRSLGVLTAARDAGLVTKSNLILGLGETSDEVRTALGDLRDAGCDIVTITQYLRPSARHHPVERWVKPEEFVQFARFAEGLGFAGVLAGPLVRSSYRAGRLYEQARNSRALASR</sequence>
<protein>
    <recommendedName>
        <fullName evidence="1">Lipoyl synthase</fullName>
        <ecNumber evidence="1">2.8.1.8</ecNumber>
    </recommendedName>
    <alternativeName>
        <fullName evidence="1">Lip-syn</fullName>
        <shortName evidence="1">LS</shortName>
    </alternativeName>
    <alternativeName>
        <fullName evidence="1">Lipoate synthase</fullName>
    </alternativeName>
    <alternativeName>
        <fullName evidence="1">Lipoic acid synthase</fullName>
    </alternativeName>
    <alternativeName>
        <fullName evidence="1">Sulfur insertion protein LipA</fullName>
    </alternativeName>
</protein>
<keyword id="KW-0004">4Fe-4S</keyword>
<keyword id="KW-0963">Cytoplasm</keyword>
<keyword id="KW-0408">Iron</keyword>
<keyword id="KW-0411">Iron-sulfur</keyword>
<keyword id="KW-0479">Metal-binding</keyword>
<keyword id="KW-0949">S-adenosyl-L-methionine</keyword>
<keyword id="KW-0808">Transferase</keyword>
<feature type="chain" id="PRO_1000012235" description="Lipoyl synthase">
    <location>
        <begin position="1"/>
        <end position="311"/>
    </location>
</feature>
<feature type="domain" description="Radical SAM core" evidence="2">
    <location>
        <begin position="67"/>
        <end position="281"/>
    </location>
</feature>
<feature type="binding site" evidence="1">
    <location>
        <position position="55"/>
    </location>
    <ligand>
        <name>[4Fe-4S] cluster</name>
        <dbReference type="ChEBI" id="CHEBI:49883"/>
        <label>1</label>
    </ligand>
</feature>
<feature type="binding site" evidence="1">
    <location>
        <position position="60"/>
    </location>
    <ligand>
        <name>[4Fe-4S] cluster</name>
        <dbReference type="ChEBI" id="CHEBI:49883"/>
        <label>1</label>
    </ligand>
</feature>
<feature type="binding site" evidence="1">
    <location>
        <position position="66"/>
    </location>
    <ligand>
        <name>[4Fe-4S] cluster</name>
        <dbReference type="ChEBI" id="CHEBI:49883"/>
        <label>1</label>
    </ligand>
</feature>
<feature type="binding site" evidence="1">
    <location>
        <position position="81"/>
    </location>
    <ligand>
        <name>[4Fe-4S] cluster</name>
        <dbReference type="ChEBI" id="CHEBI:49883"/>
        <label>2</label>
        <note>4Fe-4S-S-AdoMet</note>
    </ligand>
</feature>
<feature type="binding site" evidence="1">
    <location>
        <position position="85"/>
    </location>
    <ligand>
        <name>[4Fe-4S] cluster</name>
        <dbReference type="ChEBI" id="CHEBI:49883"/>
        <label>2</label>
        <note>4Fe-4S-S-AdoMet</note>
    </ligand>
</feature>
<feature type="binding site" evidence="1">
    <location>
        <position position="88"/>
    </location>
    <ligand>
        <name>[4Fe-4S] cluster</name>
        <dbReference type="ChEBI" id="CHEBI:49883"/>
        <label>2</label>
        <note>4Fe-4S-S-AdoMet</note>
    </ligand>
</feature>
<feature type="binding site" evidence="1">
    <location>
        <position position="292"/>
    </location>
    <ligand>
        <name>[4Fe-4S] cluster</name>
        <dbReference type="ChEBI" id="CHEBI:49883"/>
        <label>1</label>
    </ligand>
</feature>
<dbReference type="EC" id="2.8.1.8" evidence="1"/>
<dbReference type="EMBL" id="AM408590">
    <property type="protein sequence ID" value="CAL72222.1"/>
    <property type="molecule type" value="Genomic_DNA"/>
</dbReference>
<dbReference type="RefSeq" id="WP_003411460.1">
    <property type="nucleotide sequence ID" value="NC_008769.1"/>
</dbReference>
<dbReference type="SMR" id="A1KKR0"/>
<dbReference type="GeneID" id="45426194"/>
<dbReference type="KEGG" id="mbb:BCG_2234"/>
<dbReference type="HOGENOM" id="CLU_033144_2_1_11"/>
<dbReference type="UniPathway" id="UPA00538">
    <property type="reaction ID" value="UER00593"/>
</dbReference>
<dbReference type="Proteomes" id="UP000001472">
    <property type="component" value="Chromosome"/>
</dbReference>
<dbReference type="GO" id="GO:0005737">
    <property type="term" value="C:cytoplasm"/>
    <property type="evidence" value="ECO:0007669"/>
    <property type="project" value="UniProtKB-SubCell"/>
</dbReference>
<dbReference type="GO" id="GO:0051539">
    <property type="term" value="F:4 iron, 4 sulfur cluster binding"/>
    <property type="evidence" value="ECO:0007669"/>
    <property type="project" value="UniProtKB-UniRule"/>
</dbReference>
<dbReference type="GO" id="GO:0016992">
    <property type="term" value="F:lipoate synthase activity"/>
    <property type="evidence" value="ECO:0007669"/>
    <property type="project" value="UniProtKB-UniRule"/>
</dbReference>
<dbReference type="GO" id="GO:0046872">
    <property type="term" value="F:metal ion binding"/>
    <property type="evidence" value="ECO:0007669"/>
    <property type="project" value="UniProtKB-KW"/>
</dbReference>
<dbReference type="CDD" id="cd01335">
    <property type="entry name" value="Radical_SAM"/>
    <property type="match status" value="1"/>
</dbReference>
<dbReference type="FunFam" id="3.20.20.70:FF:000116">
    <property type="entry name" value="Lipoyl synthase"/>
    <property type="match status" value="1"/>
</dbReference>
<dbReference type="Gene3D" id="3.20.20.70">
    <property type="entry name" value="Aldolase class I"/>
    <property type="match status" value="1"/>
</dbReference>
<dbReference type="HAMAP" id="MF_00206">
    <property type="entry name" value="Lipoyl_synth"/>
    <property type="match status" value="1"/>
</dbReference>
<dbReference type="InterPro" id="IPR013785">
    <property type="entry name" value="Aldolase_TIM"/>
</dbReference>
<dbReference type="InterPro" id="IPR006638">
    <property type="entry name" value="Elp3/MiaA/NifB-like_rSAM"/>
</dbReference>
<dbReference type="InterPro" id="IPR031691">
    <property type="entry name" value="LIAS_N"/>
</dbReference>
<dbReference type="InterPro" id="IPR003698">
    <property type="entry name" value="Lipoyl_synth"/>
</dbReference>
<dbReference type="InterPro" id="IPR007197">
    <property type="entry name" value="rSAM"/>
</dbReference>
<dbReference type="NCBIfam" id="TIGR00510">
    <property type="entry name" value="lipA"/>
    <property type="match status" value="1"/>
</dbReference>
<dbReference type="NCBIfam" id="NF004019">
    <property type="entry name" value="PRK05481.1"/>
    <property type="match status" value="1"/>
</dbReference>
<dbReference type="NCBIfam" id="NF009544">
    <property type="entry name" value="PRK12928.1"/>
    <property type="match status" value="1"/>
</dbReference>
<dbReference type="PANTHER" id="PTHR10949">
    <property type="entry name" value="LIPOYL SYNTHASE"/>
    <property type="match status" value="1"/>
</dbReference>
<dbReference type="PANTHER" id="PTHR10949:SF0">
    <property type="entry name" value="LIPOYL SYNTHASE, MITOCHONDRIAL"/>
    <property type="match status" value="1"/>
</dbReference>
<dbReference type="Pfam" id="PF16881">
    <property type="entry name" value="LIAS_N"/>
    <property type="match status" value="1"/>
</dbReference>
<dbReference type="Pfam" id="PF04055">
    <property type="entry name" value="Radical_SAM"/>
    <property type="match status" value="1"/>
</dbReference>
<dbReference type="PIRSF" id="PIRSF005963">
    <property type="entry name" value="Lipoyl_synth"/>
    <property type="match status" value="1"/>
</dbReference>
<dbReference type="SFLD" id="SFLDF00271">
    <property type="entry name" value="lipoyl_synthase"/>
    <property type="match status" value="1"/>
</dbReference>
<dbReference type="SFLD" id="SFLDS00029">
    <property type="entry name" value="Radical_SAM"/>
    <property type="match status" value="1"/>
</dbReference>
<dbReference type="SMART" id="SM00729">
    <property type="entry name" value="Elp3"/>
    <property type="match status" value="1"/>
</dbReference>
<dbReference type="SUPFAM" id="SSF102114">
    <property type="entry name" value="Radical SAM enzymes"/>
    <property type="match status" value="1"/>
</dbReference>
<dbReference type="PROSITE" id="PS51918">
    <property type="entry name" value="RADICAL_SAM"/>
    <property type="match status" value="1"/>
</dbReference>